<name>YBHG_SALPK</name>
<protein>
    <recommendedName>
        <fullName evidence="1">UPF0194 membrane protein YbhG</fullName>
    </recommendedName>
</protein>
<gene>
    <name evidence="1" type="primary">ybhG</name>
    <name type="ordered locus">SSPA1804</name>
</gene>
<dbReference type="EMBL" id="FM200053">
    <property type="protein sequence ID" value="CAR59999.1"/>
    <property type="molecule type" value="Genomic_DNA"/>
</dbReference>
<dbReference type="SMR" id="B5BC09"/>
<dbReference type="KEGG" id="sek:SSPA1804"/>
<dbReference type="HOGENOM" id="CLU_018816_6_3_6"/>
<dbReference type="Proteomes" id="UP000001869">
    <property type="component" value="Chromosome"/>
</dbReference>
<dbReference type="GO" id="GO:0042597">
    <property type="term" value="C:periplasmic space"/>
    <property type="evidence" value="ECO:0007669"/>
    <property type="project" value="UniProtKB-SubCell"/>
</dbReference>
<dbReference type="FunFam" id="1.10.287.470:FF:000004">
    <property type="entry name" value="UPF0194 membrane protein YbhG"/>
    <property type="match status" value="1"/>
</dbReference>
<dbReference type="FunFam" id="2.40.50.100:FF:000025">
    <property type="entry name" value="UPF0194 membrane protein YbhG"/>
    <property type="match status" value="1"/>
</dbReference>
<dbReference type="Gene3D" id="2.40.30.170">
    <property type="match status" value="1"/>
</dbReference>
<dbReference type="Gene3D" id="2.40.50.100">
    <property type="match status" value="2"/>
</dbReference>
<dbReference type="Gene3D" id="1.10.287.470">
    <property type="entry name" value="Helix hairpin bin"/>
    <property type="match status" value="1"/>
</dbReference>
<dbReference type="HAMAP" id="MF_01304">
    <property type="entry name" value="UPF0194"/>
    <property type="match status" value="1"/>
</dbReference>
<dbReference type="InterPro" id="IPR032317">
    <property type="entry name" value="CusB_D23"/>
</dbReference>
<dbReference type="InterPro" id="IPR022936">
    <property type="entry name" value="UPF0194_membrane_YbhG"/>
</dbReference>
<dbReference type="InterPro" id="IPR050465">
    <property type="entry name" value="UPF0194_transport"/>
</dbReference>
<dbReference type="NCBIfam" id="NF002939">
    <property type="entry name" value="PRK03598.1"/>
    <property type="match status" value="1"/>
</dbReference>
<dbReference type="PANTHER" id="PTHR32347">
    <property type="entry name" value="EFFLUX SYSTEM COMPONENT YKNX-RELATED"/>
    <property type="match status" value="1"/>
</dbReference>
<dbReference type="PANTHER" id="PTHR32347:SF29">
    <property type="entry name" value="UPF0194 MEMBRANE PROTEIN YBHG"/>
    <property type="match status" value="1"/>
</dbReference>
<dbReference type="Pfam" id="PF16576">
    <property type="entry name" value="HlyD_D23"/>
    <property type="match status" value="1"/>
</dbReference>
<dbReference type="SUPFAM" id="SSF111369">
    <property type="entry name" value="HlyD-like secretion proteins"/>
    <property type="match status" value="3"/>
</dbReference>
<evidence type="ECO:0000255" key="1">
    <source>
        <dbReference type="HAMAP-Rule" id="MF_01304"/>
    </source>
</evidence>
<reference key="1">
    <citation type="journal article" date="2009" name="BMC Genomics">
        <title>Pseudogene accumulation in the evolutionary histories of Salmonella enterica serovars Paratyphi A and Typhi.</title>
        <authorList>
            <person name="Holt K.E."/>
            <person name="Thomson N.R."/>
            <person name="Wain J."/>
            <person name="Langridge G.C."/>
            <person name="Hasan R."/>
            <person name="Bhutta Z.A."/>
            <person name="Quail M.A."/>
            <person name="Norbertczak H."/>
            <person name="Walker D."/>
            <person name="Simmonds M."/>
            <person name="White B."/>
            <person name="Bason N."/>
            <person name="Mungall K."/>
            <person name="Dougan G."/>
            <person name="Parkhill J."/>
        </authorList>
    </citation>
    <scope>NUCLEOTIDE SEQUENCE [LARGE SCALE GENOMIC DNA]</scope>
    <source>
        <strain>AKU_12601</strain>
    </source>
</reference>
<proteinExistence type="inferred from homology"/>
<keyword id="KW-0175">Coiled coil</keyword>
<keyword id="KW-0574">Periplasm</keyword>
<keyword id="KW-0732">Signal</keyword>
<feature type="signal peptide" evidence="1">
    <location>
        <begin position="1"/>
        <end position="19"/>
    </location>
</feature>
<feature type="chain" id="PRO_1000140661" description="UPF0194 membrane protein YbhG">
    <location>
        <begin position="20"/>
        <end position="331"/>
    </location>
</feature>
<feature type="coiled-coil region" evidence="1">
    <location>
        <begin position="107"/>
        <end position="208"/>
    </location>
</feature>
<accession>B5BC09</accession>
<comment type="subcellular location">
    <subcellularLocation>
        <location evidence="1">Periplasm</location>
    </subcellularLocation>
</comment>
<comment type="similarity">
    <text evidence="1">Belongs to the UPF0194 family.</text>
</comment>
<organism>
    <name type="scientific">Salmonella paratyphi A (strain AKU_12601)</name>
    <dbReference type="NCBI Taxonomy" id="554290"/>
    <lineage>
        <taxon>Bacteria</taxon>
        <taxon>Pseudomonadati</taxon>
        <taxon>Pseudomonadota</taxon>
        <taxon>Gammaproteobacteria</taxon>
        <taxon>Enterobacterales</taxon>
        <taxon>Enterobacteriaceae</taxon>
        <taxon>Salmonella</taxon>
    </lineage>
</organism>
<sequence>MKKPVVIGLAIAAIVAVIAGGTWWYQSRQDDGLTLYGNVDIRTVNISFRVGGRLASLNVDEGDAIKAGQVLGELDHAPYENALMQAKAGVSVAQAQYDLMLAGYRDEEIAQAAAAVRQAQAAYDYAQNFYNRQQGLWKSRTISANDLENARSSRDQAQATLKSAQDKLSQYRTGNREQDIAQAKASLEQAKAQLAQAQLDLQDTTLIAPANGTLLTRAVEPGSMLNAGSTVLTLSLTRPVWVRAYVDERNLSQTQPGRDILLYTDGRPDKPYHGKIGFVSPTAEFTPKTVETPDLRTDLVYRLRIIVTDADDALRQGMPVTVKFNDEVRHE</sequence>